<comment type="function">
    <text>Couples tyrosine kinase signals with the activation of the Rho/Rac GTPases. Probably plays a pivotal role as a signal transducer protein during fruit fly development.</text>
</comment>
<comment type="subunit">
    <text evidence="7">Interacts (via SH2 domain) with Egfr (when phosphorylated on tyrosine residues).</text>
</comment>
<comment type="alternative products">
    <event type="alternative splicing"/>
    <isoform>
        <id>Q9NHV9-1</id>
        <name>A</name>
        <sequence type="displayed"/>
    </isoform>
    <isoform>
        <id>Q9NHV9-2</id>
        <name>B</name>
        <sequence type="described" ref="VSP_027801"/>
    </isoform>
</comment>
<comment type="tissue specificity">
    <text evidence="7">Ubiquitous.</text>
</comment>
<comment type="developmental stage">
    <text evidence="7">Expressed both maternally and zygotically in all stages of development.</text>
</comment>
<comment type="PTM">
    <text evidence="7">Phosphorylated on tyrosine residues.</text>
</comment>
<comment type="sequence caution" evidence="9">
    <conflict type="miscellaneous discrepancy">
        <sequence resource="EMBL-CDS" id="AAM12266"/>
    </conflict>
</comment>
<gene>
    <name type="primary">Vav</name>
    <name type="ORF">CG7893</name>
</gene>
<reference key="1">
    <citation type="journal article" date="2000" name="FEBS Lett.">
        <title>Identification of the Drosophila melanogaster homologue of the mammalian signal transducer protein, Vav.</title>
        <authorList>
            <person name="Dekel I."/>
            <person name="Russek N."/>
            <person name="Jones T."/>
            <person name="Mortin M.A."/>
            <person name="Katzav S."/>
        </authorList>
    </citation>
    <scope>NUCLEOTIDE SEQUENCE [MRNA] (ISOFORM A)</scope>
    <scope>PROBABLE FUNCTION</scope>
    <scope>INTERACTION WITH EGFR</scope>
    <scope>TISSUE SPECIFICITY</scope>
    <scope>DEVELOPMENTAL STAGE</scope>
    <scope>PHOSPHORYLATION</scope>
    <source>
        <tissue>Embryo</tissue>
    </source>
</reference>
<reference key="2">
    <citation type="journal article" date="2000" name="Science">
        <title>The genome sequence of Drosophila melanogaster.</title>
        <authorList>
            <person name="Adams M.D."/>
            <person name="Celniker S.E."/>
            <person name="Holt R.A."/>
            <person name="Evans C.A."/>
            <person name="Gocayne J.D."/>
            <person name="Amanatides P.G."/>
            <person name="Scherer S.E."/>
            <person name="Li P.W."/>
            <person name="Hoskins R.A."/>
            <person name="Galle R.F."/>
            <person name="George R.A."/>
            <person name="Lewis S.E."/>
            <person name="Richards S."/>
            <person name="Ashburner M."/>
            <person name="Henderson S.N."/>
            <person name="Sutton G.G."/>
            <person name="Wortman J.R."/>
            <person name="Yandell M.D."/>
            <person name="Zhang Q."/>
            <person name="Chen L.X."/>
            <person name="Brandon R.C."/>
            <person name="Rogers Y.-H.C."/>
            <person name="Blazej R.G."/>
            <person name="Champe M."/>
            <person name="Pfeiffer B.D."/>
            <person name="Wan K.H."/>
            <person name="Doyle C."/>
            <person name="Baxter E.G."/>
            <person name="Helt G."/>
            <person name="Nelson C.R."/>
            <person name="Miklos G.L.G."/>
            <person name="Abril J.F."/>
            <person name="Agbayani A."/>
            <person name="An H.-J."/>
            <person name="Andrews-Pfannkoch C."/>
            <person name="Baldwin D."/>
            <person name="Ballew R.M."/>
            <person name="Basu A."/>
            <person name="Baxendale J."/>
            <person name="Bayraktaroglu L."/>
            <person name="Beasley E.M."/>
            <person name="Beeson K.Y."/>
            <person name="Benos P.V."/>
            <person name="Berman B.P."/>
            <person name="Bhandari D."/>
            <person name="Bolshakov S."/>
            <person name="Borkova D."/>
            <person name="Botchan M.R."/>
            <person name="Bouck J."/>
            <person name="Brokstein P."/>
            <person name="Brottier P."/>
            <person name="Burtis K.C."/>
            <person name="Busam D.A."/>
            <person name="Butler H."/>
            <person name="Cadieu E."/>
            <person name="Center A."/>
            <person name="Chandra I."/>
            <person name="Cherry J.M."/>
            <person name="Cawley S."/>
            <person name="Dahlke C."/>
            <person name="Davenport L.B."/>
            <person name="Davies P."/>
            <person name="de Pablos B."/>
            <person name="Delcher A."/>
            <person name="Deng Z."/>
            <person name="Mays A.D."/>
            <person name="Dew I."/>
            <person name="Dietz S.M."/>
            <person name="Dodson K."/>
            <person name="Doup L.E."/>
            <person name="Downes M."/>
            <person name="Dugan-Rocha S."/>
            <person name="Dunkov B.C."/>
            <person name="Dunn P."/>
            <person name="Durbin K.J."/>
            <person name="Evangelista C.C."/>
            <person name="Ferraz C."/>
            <person name="Ferriera S."/>
            <person name="Fleischmann W."/>
            <person name="Fosler C."/>
            <person name="Gabrielian A.E."/>
            <person name="Garg N.S."/>
            <person name="Gelbart W.M."/>
            <person name="Glasser K."/>
            <person name="Glodek A."/>
            <person name="Gong F."/>
            <person name="Gorrell J.H."/>
            <person name="Gu Z."/>
            <person name="Guan P."/>
            <person name="Harris M."/>
            <person name="Harris N.L."/>
            <person name="Harvey D.A."/>
            <person name="Heiman T.J."/>
            <person name="Hernandez J.R."/>
            <person name="Houck J."/>
            <person name="Hostin D."/>
            <person name="Houston K.A."/>
            <person name="Howland T.J."/>
            <person name="Wei M.-H."/>
            <person name="Ibegwam C."/>
            <person name="Jalali M."/>
            <person name="Kalush F."/>
            <person name="Karpen G.H."/>
            <person name="Ke Z."/>
            <person name="Kennison J.A."/>
            <person name="Ketchum K.A."/>
            <person name="Kimmel B.E."/>
            <person name="Kodira C.D."/>
            <person name="Kraft C.L."/>
            <person name="Kravitz S."/>
            <person name="Kulp D."/>
            <person name="Lai Z."/>
            <person name="Lasko P."/>
            <person name="Lei Y."/>
            <person name="Levitsky A.A."/>
            <person name="Li J.H."/>
            <person name="Li Z."/>
            <person name="Liang Y."/>
            <person name="Lin X."/>
            <person name="Liu X."/>
            <person name="Mattei B."/>
            <person name="McIntosh T.C."/>
            <person name="McLeod M.P."/>
            <person name="McPherson D."/>
            <person name="Merkulov G."/>
            <person name="Milshina N.V."/>
            <person name="Mobarry C."/>
            <person name="Morris J."/>
            <person name="Moshrefi A."/>
            <person name="Mount S.M."/>
            <person name="Moy M."/>
            <person name="Murphy B."/>
            <person name="Murphy L."/>
            <person name="Muzny D.M."/>
            <person name="Nelson D.L."/>
            <person name="Nelson D.R."/>
            <person name="Nelson K.A."/>
            <person name="Nixon K."/>
            <person name="Nusskern D.R."/>
            <person name="Pacleb J.M."/>
            <person name="Palazzolo M."/>
            <person name="Pittman G.S."/>
            <person name="Pan S."/>
            <person name="Pollard J."/>
            <person name="Puri V."/>
            <person name="Reese M.G."/>
            <person name="Reinert K."/>
            <person name="Remington K."/>
            <person name="Saunders R.D.C."/>
            <person name="Scheeler F."/>
            <person name="Shen H."/>
            <person name="Shue B.C."/>
            <person name="Siden-Kiamos I."/>
            <person name="Simpson M."/>
            <person name="Skupski M.P."/>
            <person name="Smith T.J."/>
            <person name="Spier E."/>
            <person name="Spradling A.C."/>
            <person name="Stapleton M."/>
            <person name="Strong R."/>
            <person name="Sun E."/>
            <person name="Svirskas R."/>
            <person name="Tector C."/>
            <person name="Turner R."/>
            <person name="Venter E."/>
            <person name="Wang A.H."/>
            <person name="Wang X."/>
            <person name="Wang Z.-Y."/>
            <person name="Wassarman D.A."/>
            <person name="Weinstock G.M."/>
            <person name="Weissenbach J."/>
            <person name="Williams S.M."/>
            <person name="Woodage T."/>
            <person name="Worley K.C."/>
            <person name="Wu D."/>
            <person name="Yang S."/>
            <person name="Yao Q.A."/>
            <person name="Ye J."/>
            <person name="Yeh R.-F."/>
            <person name="Zaveri J.S."/>
            <person name="Zhan M."/>
            <person name="Zhang G."/>
            <person name="Zhao Q."/>
            <person name="Zheng L."/>
            <person name="Zheng X.H."/>
            <person name="Zhong F.N."/>
            <person name="Zhong W."/>
            <person name="Zhou X."/>
            <person name="Zhu S.C."/>
            <person name="Zhu X."/>
            <person name="Smith H.O."/>
            <person name="Gibbs R.A."/>
            <person name="Myers E.W."/>
            <person name="Rubin G.M."/>
            <person name="Venter J.C."/>
        </authorList>
    </citation>
    <scope>NUCLEOTIDE SEQUENCE [LARGE SCALE GENOMIC DNA]</scope>
    <source>
        <strain>Berkeley</strain>
    </source>
</reference>
<reference key="3">
    <citation type="journal article" date="2002" name="Genome Biol.">
        <title>Annotation of the Drosophila melanogaster euchromatic genome: a systematic review.</title>
        <authorList>
            <person name="Misra S."/>
            <person name="Crosby M.A."/>
            <person name="Mungall C.J."/>
            <person name="Matthews B.B."/>
            <person name="Campbell K.S."/>
            <person name="Hradecky P."/>
            <person name="Huang Y."/>
            <person name="Kaminker J.S."/>
            <person name="Millburn G.H."/>
            <person name="Prochnik S.E."/>
            <person name="Smith C.D."/>
            <person name="Tupy J.L."/>
            <person name="Whitfield E.J."/>
            <person name="Bayraktaroglu L."/>
            <person name="Berman B.P."/>
            <person name="Bettencourt B.R."/>
            <person name="Celniker S.E."/>
            <person name="de Grey A.D.N.J."/>
            <person name="Drysdale R.A."/>
            <person name="Harris N.L."/>
            <person name="Richter J."/>
            <person name="Russo S."/>
            <person name="Schroeder A.J."/>
            <person name="Shu S.Q."/>
            <person name="Stapleton M."/>
            <person name="Yamada C."/>
            <person name="Ashburner M."/>
            <person name="Gelbart W.M."/>
            <person name="Rubin G.M."/>
            <person name="Lewis S.E."/>
        </authorList>
    </citation>
    <scope>GENOME REANNOTATION</scope>
    <scope>ALTERNATIVE SPLICING</scope>
    <source>
        <strain>Berkeley</strain>
    </source>
</reference>
<reference key="4">
    <citation type="journal article" date="2002" name="Genome Biol.">
        <title>A Drosophila full-length cDNA resource.</title>
        <authorList>
            <person name="Stapleton M."/>
            <person name="Carlson J.W."/>
            <person name="Brokstein P."/>
            <person name="Yu C."/>
            <person name="Champe M."/>
            <person name="George R.A."/>
            <person name="Guarin H."/>
            <person name="Kronmiller B."/>
            <person name="Pacleb J.M."/>
            <person name="Park S."/>
            <person name="Wan K.H."/>
            <person name="Rubin G.M."/>
            <person name="Celniker S.E."/>
        </authorList>
    </citation>
    <scope>NUCLEOTIDE SEQUENCE [LARGE SCALE MRNA] (ISOFORM A)</scope>
    <source>
        <strain>Berkeley</strain>
        <tissue>Embryo</tissue>
    </source>
</reference>
<reference key="5">
    <citation type="submission" date="2007-01" db="EMBL/GenBank/DDBJ databases">
        <authorList>
            <person name="Stapleton M."/>
            <person name="Carlson J.W."/>
            <person name="Frise E."/>
            <person name="Kapadia B."/>
            <person name="Park S."/>
            <person name="Wan K.H."/>
            <person name="Yu C."/>
            <person name="Celniker S.E."/>
        </authorList>
    </citation>
    <scope>NUCLEOTIDE SEQUENCE [LARGE SCALE MRNA] (ISOFORM B)</scope>
    <source>
        <strain>Berkeley</strain>
        <tissue>Head</tissue>
        <tissue>Larva</tissue>
        <tissue>Pupae</tissue>
    </source>
</reference>
<protein>
    <recommendedName>
        <fullName>Protein vav</fullName>
        <shortName>DroVav</shortName>
        <shortName>dVAV</shortName>
    </recommendedName>
</protein>
<name>VAV_DROME</name>
<proteinExistence type="evidence at protein level"/>
<keyword id="KW-0025">Alternative splicing</keyword>
<keyword id="KW-0344">Guanine-nucleotide releasing factor</keyword>
<keyword id="KW-0479">Metal-binding</keyword>
<keyword id="KW-0597">Phosphoprotein</keyword>
<keyword id="KW-1185">Reference proteome</keyword>
<keyword id="KW-0677">Repeat</keyword>
<keyword id="KW-0727">SH2 domain</keyword>
<keyword id="KW-0728">SH3 domain</keyword>
<keyword id="KW-0862">Zinc</keyword>
<keyword id="KW-0863">Zinc-finger</keyword>
<feature type="chain" id="PRO_0000080983" description="Protein vav">
    <location>
        <begin position="1"/>
        <end position="793"/>
    </location>
</feature>
<feature type="domain" description="Calponin-homology (CH)" evidence="1">
    <location>
        <begin position="18"/>
        <end position="137"/>
    </location>
</feature>
<feature type="domain" description="DH" evidence="2">
    <location>
        <begin position="216"/>
        <end position="396"/>
    </location>
</feature>
<feature type="domain" description="PH" evidence="3">
    <location>
        <begin position="432"/>
        <end position="541"/>
    </location>
</feature>
<feature type="domain" description="SH2" evidence="4">
    <location>
        <begin position="622"/>
        <end position="726"/>
    </location>
</feature>
<feature type="domain" description="SH3" evidence="5">
    <location>
        <begin position="726"/>
        <end position="788"/>
    </location>
</feature>
<feature type="zinc finger region" description="Phorbol-ester/DAG-type" evidence="6">
    <location>
        <begin position="552"/>
        <end position="601"/>
    </location>
</feature>
<feature type="splice variant" id="VSP_027801" description="In isoform B." evidence="8">
    <original>MASSSSSNSFGGVAGVNGDLWRECVAWLTRCKVIPPDHKAAQPDAEIRILAMTLRDGVLLCNLVIHLDPSSLDPREFNRKPQMAQFLCSKNIKLFLDVCHNNFGIRDADLFEPTMLYDLTNFHRVLITLSKLSQCRKVQQLHPDLIGFNLQLSPTERSHSDEAIYKDLHST</original>
    <variation>MRRMRASRRPCFPTARAAMCASYPSISPWMWLAPRRMPHPMRSHPRRNRMPANRNHRWPPQRQAFLCPLHRGHLWAVWCPPPPHRRRFWSARASGCSERPPPSTTTAPRWRPPSTSMPTSTARTTRRSTRICATLPSRRRPNPS</variation>
    <location>
        <begin position="1"/>
        <end position="171"/>
    </location>
</feature>
<feature type="sequence conflict" description="In Ref. 1; AAF28765." evidence="9" ref="1">
    <original>T</original>
    <variation>M</variation>
    <location>
        <position position="53"/>
    </location>
</feature>
<feature type="sequence conflict" description="In Ref. 1; AAF28765." evidence="9" ref="1">
    <original>F</original>
    <variation>L</variation>
    <location>
        <position position="148"/>
    </location>
</feature>
<feature type="sequence conflict" description="In Ref. 1; AAF28765." evidence="9" ref="1">
    <original>L</original>
    <variation>M</variation>
    <location>
        <position position="372"/>
    </location>
</feature>
<feature type="sequence conflict" description="In Ref. 1; AAF28765." evidence="9" ref="1">
    <original>R</original>
    <variation>E</variation>
    <location>
        <position position="503"/>
    </location>
</feature>
<feature type="sequence conflict" description="In Ref. 1; AAF28765." evidence="9" ref="1">
    <original>LLRVRPQGPSTAHETMYALS</original>
    <variation>PVASSSAGPIHCPRDDVCAY</variation>
    <location>
        <begin position="645"/>
        <end position="664"/>
    </location>
</feature>
<feature type="sequence conflict" description="In Ref. 1; AAF28765." evidence="9" ref="1">
    <original>P</original>
    <variation>Q</variation>
    <location>
        <position position="739"/>
    </location>
</feature>
<accession>Q9NHV9</accession>
<accession>A2RVJ3</accession>
<accession>A4V4R6</accession>
<accession>Q8SWT3</accession>
<accession>Q8T061</accession>
<accession>Q9VWJ5</accession>
<evidence type="ECO:0000255" key="1">
    <source>
        <dbReference type="PROSITE-ProRule" id="PRU00044"/>
    </source>
</evidence>
<evidence type="ECO:0000255" key="2">
    <source>
        <dbReference type="PROSITE-ProRule" id="PRU00062"/>
    </source>
</evidence>
<evidence type="ECO:0000255" key="3">
    <source>
        <dbReference type="PROSITE-ProRule" id="PRU00145"/>
    </source>
</evidence>
<evidence type="ECO:0000255" key="4">
    <source>
        <dbReference type="PROSITE-ProRule" id="PRU00191"/>
    </source>
</evidence>
<evidence type="ECO:0000255" key="5">
    <source>
        <dbReference type="PROSITE-ProRule" id="PRU00192"/>
    </source>
</evidence>
<evidence type="ECO:0000255" key="6">
    <source>
        <dbReference type="PROSITE-ProRule" id="PRU00226"/>
    </source>
</evidence>
<evidence type="ECO:0000269" key="7">
    <source>
    </source>
</evidence>
<evidence type="ECO:0000303" key="8">
    <source ref="5"/>
</evidence>
<evidence type="ECO:0000305" key="9"/>
<organism>
    <name type="scientific">Drosophila melanogaster</name>
    <name type="common">Fruit fly</name>
    <dbReference type="NCBI Taxonomy" id="7227"/>
    <lineage>
        <taxon>Eukaryota</taxon>
        <taxon>Metazoa</taxon>
        <taxon>Ecdysozoa</taxon>
        <taxon>Arthropoda</taxon>
        <taxon>Hexapoda</taxon>
        <taxon>Insecta</taxon>
        <taxon>Pterygota</taxon>
        <taxon>Neoptera</taxon>
        <taxon>Endopterygota</taxon>
        <taxon>Diptera</taxon>
        <taxon>Brachycera</taxon>
        <taxon>Muscomorpha</taxon>
        <taxon>Ephydroidea</taxon>
        <taxon>Drosophilidae</taxon>
        <taxon>Drosophila</taxon>
        <taxon>Sophophora</taxon>
    </lineage>
</organism>
<sequence>MASSSSSNSFGGVAGVNGDLWRECVAWLTRCKVIPPDHKAAQPDAEIRILAMTLRDGVLLCNLVIHLDPSSLDPREFNRKPQMAQFLCSKNIKLFLDVCHNNFGIRDADLFEPTMLYDLTNFHRVLITLSKLSQCRKVQQLHPDLIGFNLQLSPTERSHSDEAIYKDLHSTTTDNIACNGTGYDHTNTKEEEVYQDLCALHRTSRSQTASSTSFEQRDYVIRELIDTESNYLDVLTALKTKFMGPLERHLNQDELRLIFPRIRELVDIHTKFLDKLRESLTPNAKVKMAQVFLDFREPFLIYGEFCSLLLGAIDYLADVCKKNQIIDQLVQKCERDYNVGKLQLRDILSVPMQRILKYHLLLDKLVKETSPLHDDYRSLERAKEAMIDVSQYINEVKRDSDHLVIIQKVKDSICDIHLLQNGNGSDLLQYGRLLLDGELHIKAHEDQKTKLRYAFVFDKILIMVKALHIKTGDMQYTYRDSHNLADYRVEQSHSRRTIGRDTRFKYQLLLARKSGKTAFTLYLKSEHERDKWRKALTEAMESLEPPGCQSTDHKMEIYTFDAPTTCRHCSKFLKGRIHQGYRCKVCQISVHKGCISSTGRCKQNPVSVPPPVCDRQLSEFNWFAGNMDRETAAHRLENRRIGTYLLRVRPQGPSTAHETMYALSLKTDDNVIKHMKINQENSGDSMLYCLSSRRHFKTIVELVSYYERNDLGENFAGLNQSLQWPYKEVIATALYDYEPKAGSNQLQLRTDCQVLVIGKDGDSKGWWRGKIGDTVGYFPKEYVQEQKLASEEL</sequence>
<dbReference type="EMBL" id="AF218780">
    <property type="protein sequence ID" value="AAF28765.1"/>
    <property type="molecule type" value="mRNA"/>
</dbReference>
<dbReference type="EMBL" id="AE014298">
    <property type="protein sequence ID" value="AAF48943.3"/>
    <property type="molecule type" value="Genomic_DNA"/>
</dbReference>
<dbReference type="EMBL" id="AE014298">
    <property type="protein sequence ID" value="AAN09485.1"/>
    <property type="molecule type" value="Genomic_DNA"/>
</dbReference>
<dbReference type="EMBL" id="AY069536">
    <property type="protein sequence ID" value="AAL39681.1"/>
    <property type="molecule type" value="mRNA"/>
</dbReference>
<dbReference type="EMBL" id="AY095173">
    <property type="protein sequence ID" value="AAM12266.1"/>
    <property type="status" value="ALT_SEQ"/>
    <property type="molecule type" value="mRNA"/>
</dbReference>
<dbReference type="EMBL" id="BT029984">
    <property type="protein sequence ID" value="ABM92858.1"/>
    <property type="molecule type" value="mRNA"/>
</dbReference>
<dbReference type="RefSeq" id="NP_573372.1">
    <molecule id="Q9NHV9-1"/>
    <property type="nucleotide sequence ID" value="NM_133144.4"/>
</dbReference>
<dbReference type="RefSeq" id="NP_728235.1">
    <molecule id="Q9NHV9-1"/>
    <property type="nucleotide sequence ID" value="NM_167642.3"/>
</dbReference>
<dbReference type="SMR" id="Q9NHV9"/>
<dbReference type="BioGRID" id="59225">
    <property type="interactions" value="14"/>
</dbReference>
<dbReference type="FunCoup" id="Q9NHV9">
    <property type="interactions" value="970"/>
</dbReference>
<dbReference type="IntAct" id="Q9NHV9">
    <property type="interactions" value="4"/>
</dbReference>
<dbReference type="STRING" id="7227.FBpp0112228"/>
<dbReference type="PeptideAtlas" id="Q9NHV9"/>
<dbReference type="EnsemblMetazoa" id="FBtr0074677">
    <molecule id="Q9NHV9-1"/>
    <property type="protein sequence ID" value="FBpp0074448"/>
    <property type="gene ID" value="FBgn0040068"/>
</dbReference>
<dbReference type="EnsemblMetazoa" id="FBtr0074678">
    <molecule id="Q9NHV9-1"/>
    <property type="protein sequence ID" value="FBpp0074449"/>
    <property type="gene ID" value="FBgn0040068"/>
</dbReference>
<dbReference type="GeneID" id="32920"/>
<dbReference type="KEGG" id="dme:Dmel_CG7893"/>
<dbReference type="UCSC" id="CG7893-RA">
    <molecule id="Q9NHV9-1"/>
    <property type="organism name" value="d. melanogaster"/>
</dbReference>
<dbReference type="AGR" id="FB:FBgn0040068"/>
<dbReference type="CTD" id="32920"/>
<dbReference type="FlyBase" id="FBgn0040068">
    <property type="gene designation" value="Vav"/>
</dbReference>
<dbReference type="VEuPathDB" id="VectorBase:FBgn0040068"/>
<dbReference type="eggNOG" id="KOG2996">
    <property type="taxonomic scope" value="Eukaryota"/>
</dbReference>
<dbReference type="GeneTree" id="ENSGT00940000168738"/>
<dbReference type="InParanoid" id="Q9NHV9"/>
<dbReference type="OrthoDB" id="5340910at2759"/>
<dbReference type="PhylomeDB" id="Q9NHV9"/>
<dbReference type="Reactome" id="R-DME-114604">
    <property type="pathway name" value="GPVI-mediated activation cascade"/>
</dbReference>
<dbReference type="Reactome" id="R-DME-1257604">
    <property type="pathway name" value="PIP3 activates AKT signaling"/>
</dbReference>
<dbReference type="Reactome" id="R-DME-1433557">
    <property type="pathway name" value="Signaling by SCF-KIT"/>
</dbReference>
<dbReference type="Reactome" id="R-DME-193648">
    <property type="pathway name" value="NRAGE signals death through JNK"/>
</dbReference>
<dbReference type="Reactome" id="R-DME-2424491">
    <property type="pathway name" value="DAP12 signaling"/>
</dbReference>
<dbReference type="Reactome" id="R-DME-2871796">
    <property type="pathway name" value="FCERI mediated MAPK activation"/>
</dbReference>
<dbReference type="Reactome" id="R-DME-2871809">
    <property type="pathway name" value="FCERI mediated Ca+2 mobilization"/>
</dbReference>
<dbReference type="Reactome" id="R-DME-3928665">
    <property type="pathway name" value="EPH-ephrin mediated repulsion of cells"/>
</dbReference>
<dbReference type="Reactome" id="R-DME-416482">
    <property type="pathway name" value="G alpha (12/13) signalling events"/>
</dbReference>
<dbReference type="Reactome" id="R-DME-4420097">
    <property type="pathway name" value="VEGFA-VEGFR2 Pathway"/>
</dbReference>
<dbReference type="Reactome" id="R-DME-445144">
    <property type="pathway name" value="Signal transduction by L1"/>
</dbReference>
<dbReference type="Reactome" id="R-DME-512988">
    <property type="pathway name" value="Interleukin-3, Interleukin-5 and GM-CSF signaling"/>
</dbReference>
<dbReference type="Reactome" id="R-DME-5218920">
    <property type="pathway name" value="VEGFR2 mediated vascular permeability"/>
</dbReference>
<dbReference type="Reactome" id="R-DME-6811558">
    <property type="pathway name" value="PI5P, PP2A and IER3 Regulate PI3K/AKT Signaling"/>
</dbReference>
<dbReference type="Reactome" id="R-DME-8980692">
    <property type="pathway name" value="RHOA GTPase cycle"/>
</dbReference>
<dbReference type="Reactome" id="R-DME-9013026">
    <property type="pathway name" value="RHOB GTPase cycle"/>
</dbReference>
<dbReference type="Reactome" id="R-DME-9013148">
    <property type="pathway name" value="CDC42 GTPase cycle"/>
</dbReference>
<dbReference type="Reactome" id="R-DME-9013149">
    <property type="pathway name" value="RAC1 GTPase cycle"/>
</dbReference>
<dbReference type="Reactome" id="R-DME-9013404">
    <property type="pathway name" value="RAC2 GTPase cycle"/>
</dbReference>
<dbReference type="Reactome" id="R-DME-9013408">
    <property type="pathway name" value="RHOG GTPase cycle"/>
</dbReference>
<dbReference type="Reactome" id="R-DME-9013423">
    <property type="pathway name" value="RAC3 GTPase cycle"/>
</dbReference>
<dbReference type="Reactome" id="R-DME-9027284">
    <property type="pathway name" value="Erythropoietin activates RAS"/>
</dbReference>
<dbReference type="Reactome" id="R-DME-912631">
    <property type="pathway name" value="Regulation of signaling by CBL"/>
</dbReference>
<dbReference type="Reactome" id="R-DME-9748787">
    <property type="pathway name" value="Azathioprine ADME"/>
</dbReference>
<dbReference type="Reactome" id="R-DME-983695">
    <property type="pathway name" value="Antigen activates B Cell Receptor (BCR) leading to generation of second messengers"/>
</dbReference>
<dbReference type="SignaLink" id="Q9NHV9"/>
<dbReference type="BioGRID-ORCS" id="32920">
    <property type="hits" value="0 hits in 3 CRISPR screens"/>
</dbReference>
<dbReference type="GenomeRNAi" id="32920"/>
<dbReference type="PRO" id="PR:Q9NHV9"/>
<dbReference type="Proteomes" id="UP000000803">
    <property type="component" value="Chromosome X"/>
</dbReference>
<dbReference type="Bgee" id="FBgn0040068">
    <property type="expression patterns" value="Expressed in outer photoreceptor cell (Drosophila) in insect head and 219 other cell types or tissues"/>
</dbReference>
<dbReference type="ExpressionAtlas" id="Q9NHV9">
    <property type="expression patterns" value="baseline and differential"/>
</dbReference>
<dbReference type="GO" id="GO:0005737">
    <property type="term" value="C:cytoplasm"/>
    <property type="evidence" value="ECO:0000318"/>
    <property type="project" value="GO_Central"/>
</dbReference>
<dbReference type="GO" id="GO:0005829">
    <property type="term" value="C:cytosol"/>
    <property type="evidence" value="ECO:0000314"/>
    <property type="project" value="FlyBase"/>
</dbReference>
<dbReference type="GO" id="GO:0005085">
    <property type="term" value="F:guanyl-nucleotide exchange factor activity"/>
    <property type="evidence" value="ECO:0000314"/>
    <property type="project" value="FlyBase"/>
</dbReference>
<dbReference type="GO" id="GO:0008270">
    <property type="term" value="F:zinc ion binding"/>
    <property type="evidence" value="ECO:0007669"/>
    <property type="project" value="UniProtKB-KW"/>
</dbReference>
<dbReference type="GO" id="GO:0030036">
    <property type="term" value="P:actin cytoskeleton organization"/>
    <property type="evidence" value="ECO:0000314"/>
    <property type="project" value="FlyBase"/>
</dbReference>
<dbReference type="GO" id="GO:0007411">
    <property type="term" value="P:axon guidance"/>
    <property type="evidence" value="ECO:0000315"/>
    <property type="project" value="FlyBase"/>
</dbReference>
<dbReference type="GO" id="GO:0007409">
    <property type="term" value="P:axonogenesis"/>
    <property type="evidence" value="ECO:0000315"/>
    <property type="project" value="FlyBase"/>
</dbReference>
<dbReference type="GO" id="GO:0007298">
    <property type="term" value="P:border follicle cell migration"/>
    <property type="evidence" value="ECO:0000314"/>
    <property type="project" value="FlyBase"/>
</dbReference>
<dbReference type="GO" id="GO:0016477">
    <property type="term" value="P:cell migration"/>
    <property type="evidence" value="ECO:0000315"/>
    <property type="project" value="FlyBase"/>
</dbReference>
<dbReference type="GO" id="GO:0007417">
    <property type="term" value="P:central nervous system development"/>
    <property type="evidence" value="ECO:0000316"/>
    <property type="project" value="FlyBase"/>
</dbReference>
<dbReference type="GO" id="GO:0001745">
    <property type="term" value="P:compound eye morphogenesis"/>
    <property type="evidence" value="ECO:0000315"/>
    <property type="project" value="FlyBase"/>
</dbReference>
<dbReference type="GO" id="GO:0007391">
    <property type="term" value="P:dorsal closure"/>
    <property type="evidence" value="ECO:0000315"/>
    <property type="project" value="FlyBase"/>
</dbReference>
<dbReference type="GO" id="GO:0007173">
    <property type="term" value="P:epidermal growth factor receptor signaling pathway"/>
    <property type="evidence" value="ECO:0000314"/>
    <property type="project" value="FlyBase"/>
</dbReference>
<dbReference type="GO" id="GO:0044351">
    <property type="term" value="P:macropinocytosis"/>
    <property type="evidence" value="ECO:0000315"/>
    <property type="project" value="FlyBase"/>
</dbReference>
<dbReference type="GO" id="GO:0035011">
    <property type="term" value="P:melanotic encapsulation of foreign target"/>
    <property type="evidence" value="ECO:0000315"/>
    <property type="project" value="FlyBase"/>
</dbReference>
<dbReference type="GO" id="GO:0007520">
    <property type="term" value="P:myoblast fusion"/>
    <property type="evidence" value="ECO:0000315"/>
    <property type="project" value="FlyBase"/>
</dbReference>
<dbReference type="GO" id="GO:0042059">
    <property type="term" value="P:negative regulation of epidermal growth factor receptor signaling pathway"/>
    <property type="evidence" value="ECO:0000315"/>
    <property type="project" value="FlyBase"/>
</dbReference>
<dbReference type="GO" id="GO:0007424">
    <property type="term" value="P:open tracheal system development"/>
    <property type="evidence" value="ECO:0000315"/>
    <property type="project" value="FlyBase"/>
</dbReference>
<dbReference type="GO" id="GO:0072499">
    <property type="term" value="P:photoreceptor cell axon guidance"/>
    <property type="evidence" value="ECO:0000315"/>
    <property type="project" value="FlyBase"/>
</dbReference>
<dbReference type="GO" id="GO:0070374">
    <property type="term" value="P:positive regulation of ERK1 and ERK2 cascade"/>
    <property type="evidence" value="ECO:0000315"/>
    <property type="project" value="FlyBase"/>
</dbReference>
<dbReference type="GO" id="GO:0045887">
    <property type="term" value="P:positive regulation of synaptic assembly at neuromuscular junction"/>
    <property type="evidence" value="ECO:0000315"/>
    <property type="project" value="FlyBase"/>
</dbReference>
<dbReference type="GO" id="GO:0032956">
    <property type="term" value="P:regulation of actin cytoskeleton organization"/>
    <property type="evidence" value="ECO:0000315"/>
    <property type="project" value="FlyBase"/>
</dbReference>
<dbReference type="GO" id="GO:1903391">
    <property type="term" value="P:regulation of adherens junction organization"/>
    <property type="evidence" value="ECO:0000315"/>
    <property type="project" value="FlyBase"/>
</dbReference>
<dbReference type="GO" id="GO:0007264">
    <property type="term" value="P:small GTPase-mediated signal transduction"/>
    <property type="evidence" value="ECO:0000318"/>
    <property type="project" value="GO_Central"/>
</dbReference>
<dbReference type="GO" id="GO:0048010">
    <property type="term" value="P:vascular endothelial growth factor receptor signaling pathway"/>
    <property type="evidence" value="ECO:0000314"/>
    <property type="project" value="FlyBase"/>
</dbReference>
<dbReference type="CDD" id="cd20810">
    <property type="entry name" value="C1_VAV"/>
    <property type="match status" value="1"/>
</dbReference>
<dbReference type="CDD" id="cd21201">
    <property type="entry name" value="CH_VAV"/>
    <property type="match status" value="1"/>
</dbReference>
<dbReference type="CDD" id="cd01223">
    <property type="entry name" value="PH_Vav"/>
    <property type="match status" value="1"/>
</dbReference>
<dbReference type="CDD" id="cd00160">
    <property type="entry name" value="RhoGEF"/>
    <property type="match status" value="1"/>
</dbReference>
<dbReference type="CDD" id="cd09940">
    <property type="entry name" value="SH2_Vav_family"/>
    <property type="match status" value="1"/>
</dbReference>
<dbReference type="FunFam" id="2.30.29.30:FF:000368">
    <property type="entry name" value="Uncharacterized protein, isoform B"/>
    <property type="match status" value="1"/>
</dbReference>
<dbReference type="FunFam" id="3.30.505.10:FF:000091">
    <property type="entry name" value="Uncharacterized protein, isoform C"/>
    <property type="match status" value="1"/>
</dbReference>
<dbReference type="FunFam" id="1.10.418.10:FF:000019">
    <property type="entry name" value="Vav guanine nucleotide exchange factor 2"/>
    <property type="match status" value="1"/>
</dbReference>
<dbReference type="Gene3D" id="3.30.60.20">
    <property type="match status" value="1"/>
</dbReference>
<dbReference type="Gene3D" id="1.10.418.10">
    <property type="entry name" value="Calponin-like domain"/>
    <property type="match status" value="1"/>
</dbReference>
<dbReference type="Gene3D" id="1.20.900.10">
    <property type="entry name" value="Dbl homology (DH) domain"/>
    <property type="match status" value="1"/>
</dbReference>
<dbReference type="Gene3D" id="2.30.29.30">
    <property type="entry name" value="Pleckstrin-homology domain (PH domain)/Phosphotyrosine-binding domain (PTB)"/>
    <property type="match status" value="1"/>
</dbReference>
<dbReference type="Gene3D" id="3.30.505.10">
    <property type="entry name" value="SH2 domain"/>
    <property type="match status" value="1"/>
</dbReference>
<dbReference type="Gene3D" id="2.30.30.40">
    <property type="entry name" value="SH3 Domains"/>
    <property type="match status" value="1"/>
</dbReference>
<dbReference type="InterPro" id="IPR001715">
    <property type="entry name" value="CH_dom"/>
</dbReference>
<dbReference type="InterPro" id="IPR036872">
    <property type="entry name" value="CH_dom_sf"/>
</dbReference>
<dbReference type="InterPro" id="IPR035899">
    <property type="entry name" value="DBL_dom_sf"/>
</dbReference>
<dbReference type="InterPro" id="IPR000219">
    <property type="entry name" value="DH_dom"/>
</dbReference>
<dbReference type="InterPro" id="IPR002219">
    <property type="entry name" value="PE/DAG-bd"/>
</dbReference>
<dbReference type="InterPro" id="IPR011993">
    <property type="entry name" value="PH-like_dom_sf"/>
</dbReference>
<dbReference type="InterPro" id="IPR001849">
    <property type="entry name" value="PH_domain"/>
</dbReference>
<dbReference type="InterPro" id="IPR037832">
    <property type="entry name" value="PH_Vav"/>
</dbReference>
<dbReference type="InterPro" id="IPR000980">
    <property type="entry name" value="SH2"/>
</dbReference>
<dbReference type="InterPro" id="IPR036860">
    <property type="entry name" value="SH2_dom_sf"/>
</dbReference>
<dbReference type="InterPro" id="IPR036028">
    <property type="entry name" value="SH3-like_dom_sf"/>
</dbReference>
<dbReference type="InterPro" id="IPR001452">
    <property type="entry name" value="SH3_domain"/>
</dbReference>
<dbReference type="InterPro" id="IPR055251">
    <property type="entry name" value="SOS1_NGEF_PH"/>
</dbReference>
<dbReference type="InterPro" id="IPR035031">
    <property type="entry name" value="Vav_SH2_invertebrate"/>
</dbReference>
<dbReference type="PANTHER" id="PTHR45818">
    <property type="entry name" value="PROTEIN VAV"/>
    <property type="match status" value="1"/>
</dbReference>
<dbReference type="PANTHER" id="PTHR45818:SF3">
    <property type="entry name" value="PROTEIN VAV"/>
    <property type="match status" value="1"/>
</dbReference>
<dbReference type="Pfam" id="PF00130">
    <property type="entry name" value="C1_1"/>
    <property type="match status" value="1"/>
</dbReference>
<dbReference type="Pfam" id="PF00307">
    <property type="entry name" value="CH"/>
    <property type="match status" value="1"/>
</dbReference>
<dbReference type="Pfam" id="PF00621">
    <property type="entry name" value="RhoGEF"/>
    <property type="match status" value="1"/>
</dbReference>
<dbReference type="Pfam" id="PF00017">
    <property type="entry name" value="SH2"/>
    <property type="match status" value="1"/>
</dbReference>
<dbReference type="Pfam" id="PF00018">
    <property type="entry name" value="SH3_1"/>
    <property type="match status" value="1"/>
</dbReference>
<dbReference type="Pfam" id="PF22697">
    <property type="entry name" value="SOS1_NGEF_PH"/>
    <property type="match status" value="1"/>
</dbReference>
<dbReference type="SMART" id="SM00109">
    <property type="entry name" value="C1"/>
    <property type="match status" value="1"/>
</dbReference>
<dbReference type="SMART" id="SM00033">
    <property type="entry name" value="CH"/>
    <property type="match status" value="1"/>
</dbReference>
<dbReference type="SMART" id="SM00233">
    <property type="entry name" value="PH"/>
    <property type="match status" value="1"/>
</dbReference>
<dbReference type="SMART" id="SM00325">
    <property type="entry name" value="RhoGEF"/>
    <property type="match status" value="1"/>
</dbReference>
<dbReference type="SMART" id="SM00252">
    <property type="entry name" value="SH2"/>
    <property type="match status" value="1"/>
</dbReference>
<dbReference type="SMART" id="SM00326">
    <property type="entry name" value="SH3"/>
    <property type="match status" value="1"/>
</dbReference>
<dbReference type="SUPFAM" id="SSF47576">
    <property type="entry name" value="Calponin-homology domain, CH-domain"/>
    <property type="match status" value="1"/>
</dbReference>
<dbReference type="SUPFAM" id="SSF48065">
    <property type="entry name" value="DBL homology domain (DH-domain)"/>
    <property type="match status" value="1"/>
</dbReference>
<dbReference type="SUPFAM" id="SSF50729">
    <property type="entry name" value="PH domain-like"/>
    <property type="match status" value="1"/>
</dbReference>
<dbReference type="SUPFAM" id="SSF55550">
    <property type="entry name" value="SH2 domain"/>
    <property type="match status" value="1"/>
</dbReference>
<dbReference type="SUPFAM" id="SSF50044">
    <property type="entry name" value="SH3-domain"/>
    <property type="match status" value="1"/>
</dbReference>
<dbReference type="PROSITE" id="PS50021">
    <property type="entry name" value="CH"/>
    <property type="match status" value="1"/>
</dbReference>
<dbReference type="PROSITE" id="PS50010">
    <property type="entry name" value="DH_2"/>
    <property type="match status" value="1"/>
</dbReference>
<dbReference type="PROSITE" id="PS50003">
    <property type="entry name" value="PH_DOMAIN"/>
    <property type="match status" value="1"/>
</dbReference>
<dbReference type="PROSITE" id="PS50001">
    <property type="entry name" value="SH2"/>
    <property type="match status" value="1"/>
</dbReference>
<dbReference type="PROSITE" id="PS50002">
    <property type="entry name" value="SH3"/>
    <property type="match status" value="1"/>
</dbReference>
<dbReference type="PROSITE" id="PS00479">
    <property type="entry name" value="ZF_DAG_PE_1"/>
    <property type="match status" value="1"/>
</dbReference>
<dbReference type="PROSITE" id="PS50081">
    <property type="entry name" value="ZF_DAG_PE_2"/>
    <property type="match status" value="1"/>
</dbReference>